<sequence length="525" mass="58659">MTENIHKHRILILDFGSQYTQLVARRVRELGVYCELWAWDVTEAQIRDFNPSGIILSGGPESTTEENSPRAPQYVFEAGVPVFGVCYGMQTMAMQLGGHVEASNEREFGYAQVEVVNDSALVRGIEDALTADGKPLLDVWMSHGDKVTAIPSDFVTVASTESCPFAIMANEEKRFYGVQFHPEVTHTRQGMHMLERFVRDICQCEALWTPAKIIDDAVARIREQVGDDKVILGLSGGVDSSVTAMLLHRAIGKNLTCVFVDNGLLRLNEAEQVLDMFGDHFGLNIVHVPAEDRFLSALAGENDPEAKRKIIGRVFVEVFDEEALKLEDVKWLAQGTIYPDVIESAASATGKAHVIKSHHNVGGLPKEMKMGLIEPLKELFKDEVRKIGLELGLPYDMLYRHPFPGPGLGVRVLGEVKKEYCDLLRRADAIFIEELRKADLYNKVSQAFTVFLPVRSVGVMGDGRKYDWVVSLRAVETIDFMTAHWAHLPYDFLGRVSNRIINEVNGISRVVYDISGKPPATIEWE</sequence>
<reference key="1">
    <citation type="submission" date="2008-05" db="EMBL/GenBank/DDBJ databases">
        <title>Complete sequence of Shigella boydii serotype 18 strain BS512.</title>
        <authorList>
            <person name="Rasko D.A."/>
            <person name="Rosovitz M."/>
            <person name="Maurelli A.T."/>
            <person name="Myers G."/>
            <person name="Seshadri R."/>
            <person name="Cer R."/>
            <person name="Jiang L."/>
            <person name="Ravel J."/>
            <person name="Sebastian Y."/>
        </authorList>
    </citation>
    <scope>NUCLEOTIDE SEQUENCE [LARGE SCALE GENOMIC DNA]</scope>
    <source>
        <strain>CDC 3083-94 / BS512</strain>
    </source>
</reference>
<evidence type="ECO:0000255" key="1">
    <source>
        <dbReference type="HAMAP-Rule" id="MF_00344"/>
    </source>
</evidence>
<dbReference type="EC" id="6.3.5.2" evidence="1"/>
<dbReference type="EMBL" id="CP001063">
    <property type="protein sequence ID" value="ACD07771.1"/>
    <property type="molecule type" value="Genomic_DNA"/>
</dbReference>
<dbReference type="RefSeq" id="WP_000138273.1">
    <property type="nucleotide sequence ID" value="NC_010658.1"/>
</dbReference>
<dbReference type="SMR" id="B2TXT2"/>
<dbReference type="STRING" id="344609.SbBS512_E2882"/>
<dbReference type="MEROPS" id="C26.957"/>
<dbReference type="KEGG" id="sbc:SbBS512_E2882"/>
<dbReference type="HOGENOM" id="CLU_014340_0_5_6"/>
<dbReference type="UniPathway" id="UPA00189">
    <property type="reaction ID" value="UER00296"/>
</dbReference>
<dbReference type="Proteomes" id="UP000001030">
    <property type="component" value="Chromosome"/>
</dbReference>
<dbReference type="GO" id="GO:0005829">
    <property type="term" value="C:cytosol"/>
    <property type="evidence" value="ECO:0007669"/>
    <property type="project" value="TreeGrafter"/>
</dbReference>
<dbReference type="GO" id="GO:0005524">
    <property type="term" value="F:ATP binding"/>
    <property type="evidence" value="ECO:0007669"/>
    <property type="project" value="UniProtKB-UniRule"/>
</dbReference>
<dbReference type="GO" id="GO:0003921">
    <property type="term" value="F:GMP synthase activity"/>
    <property type="evidence" value="ECO:0007669"/>
    <property type="project" value="InterPro"/>
</dbReference>
<dbReference type="CDD" id="cd01742">
    <property type="entry name" value="GATase1_GMP_Synthase"/>
    <property type="match status" value="1"/>
</dbReference>
<dbReference type="CDD" id="cd01997">
    <property type="entry name" value="GMP_synthase_C"/>
    <property type="match status" value="1"/>
</dbReference>
<dbReference type="FunFam" id="3.30.300.10:FF:000002">
    <property type="entry name" value="GMP synthase [glutamine-hydrolyzing]"/>
    <property type="match status" value="1"/>
</dbReference>
<dbReference type="FunFam" id="3.40.50.620:FF:000001">
    <property type="entry name" value="GMP synthase [glutamine-hydrolyzing]"/>
    <property type="match status" value="1"/>
</dbReference>
<dbReference type="FunFam" id="3.40.50.880:FF:000001">
    <property type="entry name" value="GMP synthase [glutamine-hydrolyzing]"/>
    <property type="match status" value="1"/>
</dbReference>
<dbReference type="Gene3D" id="3.30.300.10">
    <property type="match status" value="1"/>
</dbReference>
<dbReference type="Gene3D" id="3.40.50.880">
    <property type="match status" value="1"/>
</dbReference>
<dbReference type="Gene3D" id="3.40.50.620">
    <property type="entry name" value="HUPs"/>
    <property type="match status" value="1"/>
</dbReference>
<dbReference type="HAMAP" id="MF_00344">
    <property type="entry name" value="GMP_synthase"/>
    <property type="match status" value="1"/>
</dbReference>
<dbReference type="InterPro" id="IPR029062">
    <property type="entry name" value="Class_I_gatase-like"/>
</dbReference>
<dbReference type="InterPro" id="IPR017926">
    <property type="entry name" value="GATASE"/>
</dbReference>
<dbReference type="InterPro" id="IPR001674">
    <property type="entry name" value="GMP_synth_C"/>
</dbReference>
<dbReference type="InterPro" id="IPR004739">
    <property type="entry name" value="GMP_synth_GATase"/>
</dbReference>
<dbReference type="InterPro" id="IPR022955">
    <property type="entry name" value="GMP_synthase"/>
</dbReference>
<dbReference type="InterPro" id="IPR025777">
    <property type="entry name" value="GMPS_ATP_PPase_dom"/>
</dbReference>
<dbReference type="InterPro" id="IPR022310">
    <property type="entry name" value="NAD/GMP_synthase"/>
</dbReference>
<dbReference type="InterPro" id="IPR014729">
    <property type="entry name" value="Rossmann-like_a/b/a_fold"/>
</dbReference>
<dbReference type="NCBIfam" id="TIGR00884">
    <property type="entry name" value="guaA_Cterm"/>
    <property type="match status" value="1"/>
</dbReference>
<dbReference type="NCBIfam" id="TIGR00888">
    <property type="entry name" value="guaA_Nterm"/>
    <property type="match status" value="1"/>
</dbReference>
<dbReference type="NCBIfam" id="NF000848">
    <property type="entry name" value="PRK00074.1"/>
    <property type="match status" value="1"/>
</dbReference>
<dbReference type="PANTHER" id="PTHR11922:SF2">
    <property type="entry name" value="GMP SYNTHASE [GLUTAMINE-HYDROLYZING]"/>
    <property type="match status" value="1"/>
</dbReference>
<dbReference type="PANTHER" id="PTHR11922">
    <property type="entry name" value="GMP SYNTHASE-RELATED"/>
    <property type="match status" value="1"/>
</dbReference>
<dbReference type="Pfam" id="PF00117">
    <property type="entry name" value="GATase"/>
    <property type="match status" value="1"/>
</dbReference>
<dbReference type="Pfam" id="PF00958">
    <property type="entry name" value="GMP_synt_C"/>
    <property type="match status" value="1"/>
</dbReference>
<dbReference type="Pfam" id="PF02540">
    <property type="entry name" value="NAD_synthase"/>
    <property type="match status" value="1"/>
</dbReference>
<dbReference type="PRINTS" id="PR00097">
    <property type="entry name" value="ANTSNTHASEII"/>
</dbReference>
<dbReference type="PRINTS" id="PR00099">
    <property type="entry name" value="CPSGATASE"/>
</dbReference>
<dbReference type="PRINTS" id="PR00096">
    <property type="entry name" value="GATASE"/>
</dbReference>
<dbReference type="SUPFAM" id="SSF52402">
    <property type="entry name" value="Adenine nucleotide alpha hydrolases-like"/>
    <property type="match status" value="1"/>
</dbReference>
<dbReference type="SUPFAM" id="SSF52317">
    <property type="entry name" value="Class I glutamine amidotransferase-like"/>
    <property type="match status" value="1"/>
</dbReference>
<dbReference type="SUPFAM" id="SSF54810">
    <property type="entry name" value="GMP synthetase C-terminal dimerisation domain"/>
    <property type="match status" value="1"/>
</dbReference>
<dbReference type="PROSITE" id="PS51273">
    <property type="entry name" value="GATASE_TYPE_1"/>
    <property type="match status" value="1"/>
</dbReference>
<dbReference type="PROSITE" id="PS51553">
    <property type="entry name" value="GMPS_ATP_PPASE"/>
    <property type="match status" value="1"/>
</dbReference>
<comment type="function">
    <text evidence="1">Catalyzes the synthesis of GMP from XMP.</text>
</comment>
<comment type="catalytic activity">
    <reaction evidence="1">
        <text>XMP + L-glutamine + ATP + H2O = GMP + L-glutamate + AMP + diphosphate + 2 H(+)</text>
        <dbReference type="Rhea" id="RHEA:11680"/>
        <dbReference type="ChEBI" id="CHEBI:15377"/>
        <dbReference type="ChEBI" id="CHEBI:15378"/>
        <dbReference type="ChEBI" id="CHEBI:29985"/>
        <dbReference type="ChEBI" id="CHEBI:30616"/>
        <dbReference type="ChEBI" id="CHEBI:33019"/>
        <dbReference type="ChEBI" id="CHEBI:57464"/>
        <dbReference type="ChEBI" id="CHEBI:58115"/>
        <dbReference type="ChEBI" id="CHEBI:58359"/>
        <dbReference type="ChEBI" id="CHEBI:456215"/>
        <dbReference type="EC" id="6.3.5.2"/>
    </reaction>
</comment>
<comment type="pathway">
    <text evidence="1">Purine metabolism; GMP biosynthesis; GMP from XMP (L-Gln route): step 1/1.</text>
</comment>
<comment type="subunit">
    <text evidence="1">Homodimer.</text>
</comment>
<accession>B2TXT2</accession>
<proteinExistence type="inferred from homology"/>
<feature type="chain" id="PRO_1000120414" description="GMP synthase [glutamine-hydrolyzing]">
    <location>
        <begin position="1"/>
        <end position="525"/>
    </location>
</feature>
<feature type="domain" description="Glutamine amidotransferase type-1" evidence="1">
    <location>
        <begin position="9"/>
        <end position="207"/>
    </location>
</feature>
<feature type="domain" description="GMPS ATP-PPase" evidence="1">
    <location>
        <begin position="208"/>
        <end position="400"/>
    </location>
</feature>
<feature type="active site" description="Nucleophile" evidence="1">
    <location>
        <position position="86"/>
    </location>
</feature>
<feature type="active site" evidence="1">
    <location>
        <position position="181"/>
    </location>
</feature>
<feature type="active site" evidence="1">
    <location>
        <position position="183"/>
    </location>
</feature>
<feature type="binding site" evidence="1">
    <location>
        <begin position="235"/>
        <end position="241"/>
    </location>
    <ligand>
        <name>ATP</name>
        <dbReference type="ChEBI" id="CHEBI:30616"/>
    </ligand>
</feature>
<protein>
    <recommendedName>
        <fullName evidence="1">GMP synthase [glutamine-hydrolyzing]</fullName>
        <ecNumber evidence="1">6.3.5.2</ecNumber>
    </recommendedName>
    <alternativeName>
        <fullName evidence="1">GMP synthetase</fullName>
    </alternativeName>
    <alternativeName>
        <fullName evidence="1">Glutamine amidotransferase</fullName>
    </alternativeName>
</protein>
<gene>
    <name evidence="1" type="primary">guaA</name>
    <name type="ordered locus">SbBS512_E2882</name>
</gene>
<organism>
    <name type="scientific">Shigella boydii serotype 18 (strain CDC 3083-94 / BS512)</name>
    <dbReference type="NCBI Taxonomy" id="344609"/>
    <lineage>
        <taxon>Bacteria</taxon>
        <taxon>Pseudomonadati</taxon>
        <taxon>Pseudomonadota</taxon>
        <taxon>Gammaproteobacteria</taxon>
        <taxon>Enterobacterales</taxon>
        <taxon>Enterobacteriaceae</taxon>
        <taxon>Shigella</taxon>
    </lineage>
</organism>
<keyword id="KW-0067">ATP-binding</keyword>
<keyword id="KW-0315">Glutamine amidotransferase</keyword>
<keyword id="KW-0332">GMP biosynthesis</keyword>
<keyword id="KW-0436">Ligase</keyword>
<keyword id="KW-0547">Nucleotide-binding</keyword>
<keyword id="KW-0658">Purine biosynthesis</keyword>
<keyword id="KW-1185">Reference proteome</keyword>
<name>GUAA_SHIB3</name>